<comment type="function">
    <text evidence="1">The association of the DR1/DRAP1 heterodimer with TBP results in a functional repression of both activated and basal transcription of class II genes. This interaction precludes the formation of a transcription-competent complex by inhibiting the association of TFIIA and/or TFIIB with TBP. Can bind to DNA on its own (By similarity).</text>
</comment>
<comment type="subunit">
    <text evidence="1">Heterodimer with DRAP1.</text>
</comment>
<comment type="subcellular location">
    <subcellularLocation>
        <location evidence="1">Nucleus</location>
    </subcellularLocation>
</comment>
<comment type="similarity">
    <text evidence="4">Belongs to the NC2 beta/DR1 family.</text>
</comment>
<accession>Q5ZMV3</accession>
<feature type="chain" id="PRO_0000072439" description="Protein Dr1">
    <location>
        <begin position="1"/>
        <end position="176"/>
    </location>
</feature>
<feature type="domain" description="Histone-fold" evidence="2">
    <location>
        <begin position="12"/>
        <end position="75"/>
    </location>
</feature>
<feature type="region of interest" description="Disordered" evidence="3">
    <location>
        <begin position="152"/>
        <end position="176"/>
    </location>
</feature>
<feature type="short sequence motif" description="Nuclear localization signal" evidence="2">
    <location>
        <begin position="100"/>
        <end position="103"/>
    </location>
</feature>
<feature type="compositionally biased region" description="Low complexity" evidence="3">
    <location>
        <begin position="152"/>
        <end position="167"/>
    </location>
</feature>
<proteinExistence type="evidence at transcript level"/>
<keyword id="KW-0238">DNA-binding</keyword>
<keyword id="KW-0539">Nucleus</keyword>
<keyword id="KW-0597">Phosphoprotein</keyword>
<keyword id="KW-1185">Reference proteome</keyword>
<keyword id="KW-0678">Repressor</keyword>
<keyword id="KW-0804">Transcription</keyword>
<keyword id="KW-0805">Transcription regulation</keyword>
<reference key="1">
    <citation type="journal article" date="2005" name="Genome Biol.">
        <title>Full-length cDNAs from chicken bursal lymphocytes to facilitate gene function analysis.</title>
        <authorList>
            <person name="Caldwell R.B."/>
            <person name="Kierzek A.M."/>
            <person name="Arakawa H."/>
            <person name="Bezzubov Y."/>
            <person name="Zaim J."/>
            <person name="Fiedler P."/>
            <person name="Kutter S."/>
            <person name="Blagodatski A."/>
            <person name="Kostovska D."/>
            <person name="Koter M."/>
            <person name="Plachy J."/>
            <person name="Carninci P."/>
            <person name="Hayashizaki Y."/>
            <person name="Buerstedde J.-M."/>
        </authorList>
    </citation>
    <scope>NUCLEOTIDE SEQUENCE [LARGE SCALE MRNA]</scope>
    <source>
        <strain>CB</strain>
        <tissue>Bursa of Fabricius</tissue>
    </source>
</reference>
<sequence>MASSSGNDDDLTIPRAAINKMIKETLPNVRVANDARELVVNCCTEFIHLISSEANEICNKSEKKTISPEHVIQALESLGFGSYISEVKEVLQECKTVALKRRKASSRLENLGIPEEELLRQQQELFAKARQQQAELAQQEWLQMQQAAQQAQLAAASASASNQAGSSQDEDDEDDI</sequence>
<dbReference type="EMBL" id="AJ719281">
    <property type="protein sequence ID" value="CAG30940.1"/>
    <property type="molecule type" value="mRNA"/>
</dbReference>
<dbReference type="RefSeq" id="NP_001008478.1">
    <property type="nucleotide sequence ID" value="NM_001008478.2"/>
</dbReference>
<dbReference type="SMR" id="Q5ZMV3"/>
<dbReference type="FunCoup" id="Q5ZMV3">
    <property type="interactions" value="2085"/>
</dbReference>
<dbReference type="STRING" id="9031.ENSGALP00000009403"/>
<dbReference type="PaxDb" id="9031-ENSGALP00000009403"/>
<dbReference type="Ensembl" id="ENSGALT00010052731.1">
    <property type="protein sequence ID" value="ENSGALP00010031638.1"/>
    <property type="gene ID" value="ENSGALG00010021701.1"/>
</dbReference>
<dbReference type="GeneID" id="424496"/>
<dbReference type="KEGG" id="gga:424496"/>
<dbReference type="CTD" id="1810"/>
<dbReference type="VEuPathDB" id="HostDB:geneid_424496"/>
<dbReference type="eggNOG" id="KOG0871">
    <property type="taxonomic scope" value="Eukaryota"/>
</dbReference>
<dbReference type="GeneTree" id="ENSGT00550000075010"/>
<dbReference type="HOGENOM" id="CLU_066247_11_1_1"/>
<dbReference type="InParanoid" id="Q5ZMV3"/>
<dbReference type="OMA" id="RDAKFKK"/>
<dbReference type="OrthoDB" id="601405at2759"/>
<dbReference type="PhylomeDB" id="Q5ZMV3"/>
<dbReference type="TreeFam" id="TF317588"/>
<dbReference type="Reactome" id="R-GGA-9772755">
    <property type="pathway name" value="Formation of WDR5-containing histone-modifying complexes"/>
</dbReference>
<dbReference type="PRO" id="PR:Q5ZMV3"/>
<dbReference type="Proteomes" id="UP000000539">
    <property type="component" value="Chromosome 8"/>
</dbReference>
<dbReference type="Bgee" id="ENSGALG00000005858">
    <property type="expression patterns" value="Expressed in spermatid and 13 other cell types or tissues"/>
</dbReference>
<dbReference type="GO" id="GO:0140672">
    <property type="term" value="C:ATAC complex"/>
    <property type="evidence" value="ECO:0007669"/>
    <property type="project" value="Ensembl"/>
</dbReference>
<dbReference type="GO" id="GO:0017054">
    <property type="term" value="C:negative cofactor 2 complex"/>
    <property type="evidence" value="ECO:0000318"/>
    <property type="project" value="GO_Central"/>
</dbReference>
<dbReference type="GO" id="GO:0005654">
    <property type="term" value="C:nucleoplasm"/>
    <property type="evidence" value="ECO:0007669"/>
    <property type="project" value="Ensembl"/>
</dbReference>
<dbReference type="GO" id="GO:0090575">
    <property type="term" value="C:RNA polymerase II transcription regulator complex"/>
    <property type="evidence" value="ECO:0007669"/>
    <property type="project" value="Ensembl"/>
</dbReference>
<dbReference type="GO" id="GO:0003677">
    <property type="term" value="F:DNA binding"/>
    <property type="evidence" value="ECO:0007669"/>
    <property type="project" value="UniProtKB-KW"/>
</dbReference>
<dbReference type="GO" id="GO:0046982">
    <property type="term" value="F:protein heterodimerization activity"/>
    <property type="evidence" value="ECO:0007669"/>
    <property type="project" value="InterPro"/>
</dbReference>
<dbReference type="GO" id="GO:0016251">
    <property type="term" value="F:RNA polymerase II general transcription initiation factor activity"/>
    <property type="evidence" value="ECO:0000318"/>
    <property type="project" value="GO_Central"/>
</dbReference>
<dbReference type="GO" id="GO:0017025">
    <property type="term" value="F:TBP-class protein binding"/>
    <property type="evidence" value="ECO:0000318"/>
    <property type="project" value="GO_Central"/>
</dbReference>
<dbReference type="GO" id="GO:0000122">
    <property type="term" value="P:negative regulation of transcription by RNA polymerase II"/>
    <property type="evidence" value="ECO:0007669"/>
    <property type="project" value="Ensembl"/>
</dbReference>
<dbReference type="GO" id="GO:0051726">
    <property type="term" value="P:regulation of cell cycle"/>
    <property type="evidence" value="ECO:0007669"/>
    <property type="project" value="Ensembl"/>
</dbReference>
<dbReference type="GO" id="GO:0051302">
    <property type="term" value="P:regulation of cell division"/>
    <property type="evidence" value="ECO:0007669"/>
    <property type="project" value="Ensembl"/>
</dbReference>
<dbReference type="GO" id="GO:0045995">
    <property type="term" value="P:regulation of embryonic development"/>
    <property type="evidence" value="ECO:0007669"/>
    <property type="project" value="Ensembl"/>
</dbReference>
<dbReference type="GO" id="GO:0051123">
    <property type="term" value="P:RNA polymerase II preinitiation complex assembly"/>
    <property type="evidence" value="ECO:0000318"/>
    <property type="project" value="GO_Central"/>
</dbReference>
<dbReference type="CDD" id="cd22905">
    <property type="entry name" value="HFD_Dr1"/>
    <property type="match status" value="1"/>
</dbReference>
<dbReference type="FunFam" id="1.10.20.10:FF:000019">
    <property type="entry name" value="Negative cofactor 2 beta"/>
    <property type="match status" value="1"/>
</dbReference>
<dbReference type="Gene3D" id="1.10.20.10">
    <property type="entry name" value="Histone, subunit A"/>
    <property type="match status" value="1"/>
</dbReference>
<dbReference type="InterPro" id="IPR003958">
    <property type="entry name" value="CBFA_NFYB_domain"/>
</dbReference>
<dbReference type="InterPro" id="IPR009072">
    <property type="entry name" value="Histone-fold"/>
</dbReference>
<dbReference type="InterPro" id="IPR042225">
    <property type="entry name" value="Ncb2"/>
</dbReference>
<dbReference type="PANTHER" id="PTHR46138">
    <property type="entry name" value="PROTEIN DR1"/>
    <property type="match status" value="1"/>
</dbReference>
<dbReference type="PANTHER" id="PTHR46138:SF1">
    <property type="entry name" value="PROTEIN DR1"/>
    <property type="match status" value="1"/>
</dbReference>
<dbReference type="Pfam" id="PF00808">
    <property type="entry name" value="CBFD_NFYB_HMF"/>
    <property type="match status" value="1"/>
</dbReference>
<dbReference type="PRINTS" id="PR00615">
    <property type="entry name" value="CCAATSUBUNTA"/>
</dbReference>
<dbReference type="SUPFAM" id="SSF47113">
    <property type="entry name" value="Histone-fold"/>
    <property type="match status" value="1"/>
</dbReference>
<name>NC2B_CHICK</name>
<evidence type="ECO:0000250" key="1"/>
<evidence type="ECO:0000255" key="2"/>
<evidence type="ECO:0000256" key="3">
    <source>
        <dbReference type="SAM" id="MobiDB-lite"/>
    </source>
</evidence>
<evidence type="ECO:0000305" key="4"/>
<organism>
    <name type="scientific">Gallus gallus</name>
    <name type="common">Chicken</name>
    <dbReference type="NCBI Taxonomy" id="9031"/>
    <lineage>
        <taxon>Eukaryota</taxon>
        <taxon>Metazoa</taxon>
        <taxon>Chordata</taxon>
        <taxon>Craniata</taxon>
        <taxon>Vertebrata</taxon>
        <taxon>Euteleostomi</taxon>
        <taxon>Archelosauria</taxon>
        <taxon>Archosauria</taxon>
        <taxon>Dinosauria</taxon>
        <taxon>Saurischia</taxon>
        <taxon>Theropoda</taxon>
        <taxon>Coelurosauria</taxon>
        <taxon>Aves</taxon>
        <taxon>Neognathae</taxon>
        <taxon>Galloanserae</taxon>
        <taxon>Galliformes</taxon>
        <taxon>Phasianidae</taxon>
        <taxon>Phasianinae</taxon>
        <taxon>Gallus</taxon>
    </lineage>
</organism>
<protein>
    <recommendedName>
        <fullName>Protein Dr1</fullName>
    </recommendedName>
    <alternativeName>
        <fullName>Down-regulator of transcription 1</fullName>
    </alternativeName>
    <alternativeName>
        <fullName>Negative cofactor 2-beta</fullName>
        <shortName>NC2-beta</shortName>
    </alternativeName>
    <alternativeName>
        <fullName>TATA-binding protein-associated phosphoprotein</fullName>
    </alternativeName>
</protein>
<gene>
    <name type="primary">DR1</name>
    <name type="ORF">RCJMB04_1b9</name>
</gene>